<reference key="1">
    <citation type="submission" date="1999-03" db="EMBL/GenBank/DDBJ databases">
        <title>Mus musculus mRNA for Trif, complete cds.</title>
        <authorList>
            <person name="Kawabata M."/>
        </authorList>
    </citation>
    <scope>NUCLEOTIDE SEQUENCE [MRNA] (ISOFORM 2)</scope>
    <source>
        <tissue>Testis</tissue>
    </source>
</reference>
<reference key="2">
    <citation type="journal article" date="2005" name="Science">
        <title>The transcriptional landscape of the mammalian genome.</title>
        <authorList>
            <person name="Carninci P."/>
            <person name="Kasukawa T."/>
            <person name="Katayama S."/>
            <person name="Gough J."/>
            <person name="Frith M.C."/>
            <person name="Maeda N."/>
            <person name="Oyama R."/>
            <person name="Ravasi T."/>
            <person name="Lenhard B."/>
            <person name="Wells C."/>
            <person name="Kodzius R."/>
            <person name="Shimokawa K."/>
            <person name="Bajic V.B."/>
            <person name="Brenner S.E."/>
            <person name="Batalov S."/>
            <person name="Forrest A.R."/>
            <person name="Zavolan M."/>
            <person name="Davis M.J."/>
            <person name="Wilming L.G."/>
            <person name="Aidinis V."/>
            <person name="Allen J.E."/>
            <person name="Ambesi-Impiombato A."/>
            <person name="Apweiler R."/>
            <person name="Aturaliya R.N."/>
            <person name="Bailey T.L."/>
            <person name="Bansal M."/>
            <person name="Baxter L."/>
            <person name="Beisel K.W."/>
            <person name="Bersano T."/>
            <person name="Bono H."/>
            <person name="Chalk A.M."/>
            <person name="Chiu K.P."/>
            <person name="Choudhary V."/>
            <person name="Christoffels A."/>
            <person name="Clutterbuck D.R."/>
            <person name="Crowe M.L."/>
            <person name="Dalla E."/>
            <person name="Dalrymple B.P."/>
            <person name="de Bono B."/>
            <person name="Della Gatta G."/>
            <person name="di Bernardo D."/>
            <person name="Down T."/>
            <person name="Engstrom P."/>
            <person name="Fagiolini M."/>
            <person name="Faulkner G."/>
            <person name="Fletcher C.F."/>
            <person name="Fukushima T."/>
            <person name="Furuno M."/>
            <person name="Futaki S."/>
            <person name="Gariboldi M."/>
            <person name="Georgii-Hemming P."/>
            <person name="Gingeras T.R."/>
            <person name="Gojobori T."/>
            <person name="Green R.E."/>
            <person name="Gustincich S."/>
            <person name="Harbers M."/>
            <person name="Hayashi Y."/>
            <person name="Hensch T.K."/>
            <person name="Hirokawa N."/>
            <person name="Hill D."/>
            <person name="Huminiecki L."/>
            <person name="Iacono M."/>
            <person name="Ikeo K."/>
            <person name="Iwama A."/>
            <person name="Ishikawa T."/>
            <person name="Jakt M."/>
            <person name="Kanapin A."/>
            <person name="Katoh M."/>
            <person name="Kawasawa Y."/>
            <person name="Kelso J."/>
            <person name="Kitamura H."/>
            <person name="Kitano H."/>
            <person name="Kollias G."/>
            <person name="Krishnan S.P."/>
            <person name="Kruger A."/>
            <person name="Kummerfeld S.K."/>
            <person name="Kurochkin I.V."/>
            <person name="Lareau L.F."/>
            <person name="Lazarevic D."/>
            <person name="Lipovich L."/>
            <person name="Liu J."/>
            <person name="Liuni S."/>
            <person name="McWilliam S."/>
            <person name="Madan Babu M."/>
            <person name="Madera M."/>
            <person name="Marchionni L."/>
            <person name="Matsuda H."/>
            <person name="Matsuzawa S."/>
            <person name="Miki H."/>
            <person name="Mignone F."/>
            <person name="Miyake S."/>
            <person name="Morris K."/>
            <person name="Mottagui-Tabar S."/>
            <person name="Mulder N."/>
            <person name="Nakano N."/>
            <person name="Nakauchi H."/>
            <person name="Ng P."/>
            <person name="Nilsson R."/>
            <person name="Nishiguchi S."/>
            <person name="Nishikawa S."/>
            <person name="Nori F."/>
            <person name="Ohara O."/>
            <person name="Okazaki Y."/>
            <person name="Orlando V."/>
            <person name="Pang K.C."/>
            <person name="Pavan W.J."/>
            <person name="Pavesi G."/>
            <person name="Pesole G."/>
            <person name="Petrovsky N."/>
            <person name="Piazza S."/>
            <person name="Reed J."/>
            <person name="Reid J.F."/>
            <person name="Ring B.Z."/>
            <person name="Ringwald M."/>
            <person name="Rost B."/>
            <person name="Ruan Y."/>
            <person name="Salzberg S.L."/>
            <person name="Sandelin A."/>
            <person name="Schneider C."/>
            <person name="Schoenbach C."/>
            <person name="Sekiguchi K."/>
            <person name="Semple C.A."/>
            <person name="Seno S."/>
            <person name="Sessa L."/>
            <person name="Sheng Y."/>
            <person name="Shibata Y."/>
            <person name="Shimada H."/>
            <person name="Shimada K."/>
            <person name="Silva D."/>
            <person name="Sinclair B."/>
            <person name="Sperling S."/>
            <person name="Stupka E."/>
            <person name="Sugiura K."/>
            <person name="Sultana R."/>
            <person name="Takenaka Y."/>
            <person name="Taki K."/>
            <person name="Tammoja K."/>
            <person name="Tan S.L."/>
            <person name="Tang S."/>
            <person name="Taylor M.S."/>
            <person name="Tegner J."/>
            <person name="Teichmann S.A."/>
            <person name="Ueda H.R."/>
            <person name="van Nimwegen E."/>
            <person name="Verardo R."/>
            <person name="Wei C.L."/>
            <person name="Yagi K."/>
            <person name="Yamanishi H."/>
            <person name="Zabarovsky E."/>
            <person name="Zhu S."/>
            <person name="Zimmer A."/>
            <person name="Hide W."/>
            <person name="Bult C."/>
            <person name="Grimmond S.M."/>
            <person name="Teasdale R.D."/>
            <person name="Liu E.T."/>
            <person name="Brusic V."/>
            <person name="Quackenbush J."/>
            <person name="Wahlestedt C."/>
            <person name="Mattick J.S."/>
            <person name="Hume D.A."/>
            <person name="Kai C."/>
            <person name="Sasaki D."/>
            <person name="Tomaru Y."/>
            <person name="Fukuda S."/>
            <person name="Kanamori-Katayama M."/>
            <person name="Suzuki M."/>
            <person name="Aoki J."/>
            <person name="Arakawa T."/>
            <person name="Iida J."/>
            <person name="Imamura K."/>
            <person name="Itoh M."/>
            <person name="Kato T."/>
            <person name="Kawaji H."/>
            <person name="Kawagashira N."/>
            <person name="Kawashima T."/>
            <person name="Kojima M."/>
            <person name="Kondo S."/>
            <person name="Konno H."/>
            <person name="Nakano K."/>
            <person name="Ninomiya N."/>
            <person name="Nishio T."/>
            <person name="Okada M."/>
            <person name="Plessy C."/>
            <person name="Shibata K."/>
            <person name="Shiraki T."/>
            <person name="Suzuki S."/>
            <person name="Tagami M."/>
            <person name="Waki K."/>
            <person name="Watahiki A."/>
            <person name="Okamura-Oho Y."/>
            <person name="Suzuki H."/>
            <person name="Kawai J."/>
            <person name="Hayashizaki Y."/>
        </authorList>
    </citation>
    <scope>NUCLEOTIDE SEQUENCE [LARGE SCALE MRNA] (ISOFORMS 1 AND 2)</scope>
    <source>
        <strain>C57BL/6J</strain>
        <tissue>Embryo</tissue>
        <tissue>Embryonic stem cell</tissue>
    </source>
</reference>
<reference key="3">
    <citation type="journal article" date="2004" name="Genome Res.">
        <title>The status, quality, and expansion of the NIH full-length cDNA project: the Mammalian Gene Collection (MGC).</title>
        <authorList>
            <consortium name="The MGC Project Team"/>
        </authorList>
    </citation>
    <scope>NUCLEOTIDE SEQUENCE [LARGE SCALE MRNA] (ISOFORM 2)</scope>
    <source>
        <strain>FVB/N</strain>
        <tissue>Mammary tumor</tissue>
    </source>
</reference>
<evidence type="ECO:0000250" key="1">
    <source>
        <dbReference type="UniProtKB" id="Q8WVD3"/>
    </source>
</evidence>
<evidence type="ECO:0000255" key="2">
    <source>
        <dbReference type="PROSITE-ProRule" id="PRU00042"/>
    </source>
</evidence>
<evidence type="ECO:0000255" key="3">
    <source>
        <dbReference type="PROSITE-ProRule" id="PRU00175"/>
    </source>
</evidence>
<evidence type="ECO:0000255" key="4">
    <source>
        <dbReference type="PROSITE-ProRule" id="PRU01144"/>
    </source>
</evidence>
<evidence type="ECO:0000256" key="5">
    <source>
        <dbReference type="SAM" id="MobiDB-lite"/>
    </source>
</evidence>
<evidence type="ECO:0000303" key="6">
    <source>
    </source>
</evidence>
<evidence type="ECO:0000303" key="7">
    <source>
    </source>
</evidence>
<evidence type="ECO:0000303" key="8">
    <source ref="1"/>
</evidence>
<evidence type="ECO:0000305" key="9"/>
<evidence type="ECO:0000312" key="10">
    <source>
        <dbReference type="MGI" id="MGI:1929211"/>
    </source>
</evidence>
<feature type="chain" id="PRO_0000261608" description="E3 ubiquitin-protein ligase RNF138">
    <location>
        <begin position="1"/>
        <end position="245"/>
    </location>
</feature>
<feature type="domain" description="UIM" evidence="1">
    <location>
        <begin position="225"/>
        <end position="243"/>
    </location>
</feature>
<feature type="zinc finger region" description="RING-type" evidence="3">
    <location>
        <begin position="18"/>
        <end position="58"/>
    </location>
</feature>
<feature type="zinc finger region" description="C2HC RNF-type" evidence="4">
    <location>
        <begin position="86"/>
        <end position="105"/>
    </location>
</feature>
<feature type="zinc finger region" description="C2H2-type 1" evidence="2">
    <location>
        <begin position="157"/>
        <end position="180"/>
    </location>
</feature>
<feature type="zinc finger region" description="C2H2-type 2" evidence="1">
    <location>
        <begin position="187"/>
        <end position="215"/>
    </location>
</feature>
<feature type="region of interest" description="Disordered" evidence="5">
    <location>
        <begin position="128"/>
        <end position="154"/>
    </location>
</feature>
<feature type="binding site" evidence="4">
    <location>
        <position position="86"/>
    </location>
    <ligand>
        <name>Zn(2+)</name>
        <dbReference type="ChEBI" id="CHEBI:29105"/>
    </ligand>
</feature>
<feature type="binding site" evidence="4">
    <location>
        <position position="89"/>
    </location>
    <ligand>
        <name>Zn(2+)</name>
        <dbReference type="ChEBI" id="CHEBI:29105"/>
    </ligand>
</feature>
<feature type="binding site" evidence="4">
    <location>
        <position position="101"/>
    </location>
    <ligand>
        <name>Zn(2+)</name>
        <dbReference type="ChEBI" id="CHEBI:29105"/>
    </ligand>
</feature>
<feature type="binding site" evidence="4">
    <location>
        <position position="105"/>
    </location>
    <ligand>
        <name>Zn(2+)</name>
        <dbReference type="ChEBI" id="CHEBI:29105"/>
    </ligand>
</feature>
<feature type="modified residue" description="Phosphothreonine" evidence="1">
    <location>
        <position position="142"/>
    </location>
</feature>
<feature type="splice variant" id="VSP_021733" description="In isoform 2." evidence="6 7 8">
    <location>
        <begin position="188"/>
        <end position="223"/>
    </location>
</feature>
<feature type="sequence conflict" description="In Ref. 1; BAA76377." evidence="9" ref="1">
    <original>K</original>
    <variation>I</variation>
    <location>
        <position position="94"/>
    </location>
</feature>
<name>RN138_MOUSE</name>
<sequence length="245" mass="28299">MSEELSAATSYTEDDFYCPVCQEVLKTPVRTAACQHVFCRKCFLTAMRESGIHCPLCRGSVTRRERACPERALDLENIMRRFSGSCRCCSKKIKFYRMRHHYKSCKKYQDEYGVSSVIPNFKISQDSVRSSNRSETSASDNTETYQEDTSSSGHPTFKCPLCQESNFTRQRLLDHCNSNHLFQIVPVTCPICVSLPWGDPSQITRNFVSHLNQRHQFDYGEFVNLQLDEETQYQTAVEESFQVNM</sequence>
<gene>
    <name evidence="10" type="primary">Rnf138</name>
    <name evidence="8" type="synonym">Trif</name>
</gene>
<keyword id="KW-0025">Alternative splicing</keyword>
<keyword id="KW-0158">Chromosome</keyword>
<keyword id="KW-0227">DNA damage</keyword>
<keyword id="KW-0234">DNA repair</keyword>
<keyword id="KW-0238">DNA-binding</keyword>
<keyword id="KW-0479">Metal-binding</keyword>
<keyword id="KW-0597">Phosphoprotein</keyword>
<keyword id="KW-1185">Reference proteome</keyword>
<keyword id="KW-0677">Repeat</keyword>
<keyword id="KW-0808">Transferase</keyword>
<keyword id="KW-0832">Ubl conjugation</keyword>
<keyword id="KW-0833">Ubl conjugation pathway</keyword>
<keyword id="KW-0879">Wnt signaling pathway</keyword>
<keyword id="KW-0862">Zinc</keyword>
<keyword id="KW-0863">Zinc-finger</keyword>
<accession>Q9CQE0</accession>
<accession>Q9WTR9</accession>
<accession>Q9WTS0</accession>
<comment type="function">
    <text evidence="1">E3 ubiquitin-protein ligase involved in DNA damage response by promoting DNA resection and homologous recombination. Recruited to sites of double-strand breaks following DNA damage and specifically promotes double-strand break repair via homologous recombination. Two different, non-exclusive, mechanisms have been proposed. According to a report, regulates the choice of double-strand break repair by favoring homologous recombination over non-homologous end joining (NHEJ): acts by mediating ubiquitination of XRCC5/Ku80, leading to remove the Ku complex from DNA breaks, thereby promoting homologous recombination. According to another report, cooperates with UBE2Ds E2 ubiquitin ligases (UBE2D1, UBE2D2, UBE2D3 or UBE2D4) to promote homologous recombination by mediating ubiquitination of RBBP8/CtIP. Together with NLK, involved in the ubiquitination and degradation of TCF/LEF. Also exhibits auto-ubiquitination activity in combination with UBE2K. May act as a negative regulator in the Wnt/beta-catenin-mediated signaling pathway.</text>
</comment>
<comment type="catalytic activity">
    <reaction evidence="9">
        <text>S-ubiquitinyl-[E2 ubiquitin-conjugating enzyme]-L-cysteine + [acceptor protein]-L-lysine = [E2 ubiquitin-conjugating enzyme]-L-cysteine + N(6)-ubiquitinyl-[acceptor protein]-L-lysine.</text>
        <dbReference type="EC" id="2.3.2.27"/>
    </reaction>
</comment>
<comment type="pathway">
    <text evidence="1">Protein modification; protein ubiquitination.</text>
</comment>
<comment type="subunit">
    <text evidence="1">Interacts with NLK. Interacts with XRCC5/Ku80. Interacts with RBBP8/CtIP.</text>
</comment>
<comment type="subcellular location">
    <subcellularLocation>
        <location evidence="1">Chromosome</location>
    </subcellularLocation>
    <text evidence="1">Recruited at DNA damage sites. Localizes to sites of double-strand break: localization to double-strand break sites is mediated by the zinc fingers.</text>
</comment>
<comment type="alternative products">
    <event type="alternative splicing"/>
    <isoform>
        <id>Q9CQE0-1</id>
        <name>1</name>
        <sequence type="displayed"/>
    </isoform>
    <isoform>
        <id>Q9CQE0-2</id>
        <name>2</name>
        <sequence type="described" ref="VSP_021733"/>
    </isoform>
</comment>
<comment type="domain">
    <text evidence="1">The zinc finger domains (C2H2-type and C2HC-type zinc fingers) bind DNA and mediate recruitment to double-strand break sites. They show strong preference for DNA with 5'- or 3'-single-stranded overhangs, while they do not bind blunt-ended double-stranded DNA or poly(ADP-ribose) (PAR) polymers.</text>
</comment>
<comment type="PTM">
    <text evidence="1">Auto-ubiquitinated.</text>
</comment>
<organism>
    <name type="scientific">Mus musculus</name>
    <name type="common">Mouse</name>
    <dbReference type="NCBI Taxonomy" id="10090"/>
    <lineage>
        <taxon>Eukaryota</taxon>
        <taxon>Metazoa</taxon>
        <taxon>Chordata</taxon>
        <taxon>Craniata</taxon>
        <taxon>Vertebrata</taxon>
        <taxon>Euteleostomi</taxon>
        <taxon>Mammalia</taxon>
        <taxon>Eutheria</taxon>
        <taxon>Euarchontoglires</taxon>
        <taxon>Glires</taxon>
        <taxon>Rodentia</taxon>
        <taxon>Myomorpha</taxon>
        <taxon>Muroidea</taxon>
        <taxon>Muridae</taxon>
        <taxon>Murinae</taxon>
        <taxon>Mus</taxon>
        <taxon>Mus</taxon>
    </lineage>
</organism>
<proteinExistence type="evidence at transcript level"/>
<dbReference type="EC" id="2.3.2.27" evidence="9"/>
<dbReference type="EMBL" id="AB025010">
    <property type="protein sequence ID" value="BAA76376.1"/>
    <property type="molecule type" value="mRNA"/>
</dbReference>
<dbReference type="EMBL" id="AB025011">
    <property type="protein sequence ID" value="BAA76377.1"/>
    <property type="molecule type" value="mRNA"/>
</dbReference>
<dbReference type="EMBL" id="AK010486">
    <property type="protein sequence ID" value="BAB26977.1"/>
    <property type="molecule type" value="mRNA"/>
</dbReference>
<dbReference type="EMBL" id="AK004238">
    <property type="protein sequence ID" value="BAB23232.1"/>
    <property type="molecule type" value="mRNA"/>
</dbReference>
<dbReference type="EMBL" id="AK136138">
    <property type="protein sequence ID" value="BAE22840.1"/>
    <property type="molecule type" value="mRNA"/>
</dbReference>
<dbReference type="EMBL" id="BC003712">
    <property type="protein sequence ID" value="AAH03712.1"/>
    <property type="molecule type" value="mRNA"/>
</dbReference>
<dbReference type="CCDS" id="CCDS29089.1">
    <molecule id="Q9CQE0-2"/>
</dbReference>
<dbReference type="CCDS" id="CCDS29090.1">
    <molecule id="Q9CQE0-1"/>
</dbReference>
<dbReference type="RefSeq" id="NP_001289934.1">
    <property type="nucleotide sequence ID" value="NM_001303005.1"/>
</dbReference>
<dbReference type="RefSeq" id="NP_001289940.1">
    <property type="nucleotide sequence ID" value="NM_001303011.1"/>
</dbReference>
<dbReference type="RefSeq" id="NP_062680.2">
    <molecule id="Q9CQE0-2"/>
    <property type="nucleotide sequence ID" value="NM_019706.3"/>
</dbReference>
<dbReference type="RefSeq" id="NP_997506.1">
    <molecule id="Q9CQE0-1"/>
    <property type="nucleotide sequence ID" value="NM_207623.2"/>
</dbReference>
<dbReference type="RefSeq" id="XP_011245277.1">
    <molecule id="Q9CQE0-1"/>
    <property type="nucleotide sequence ID" value="XM_011246975.4"/>
</dbReference>
<dbReference type="BioGRID" id="208028">
    <property type="interactions" value="33"/>
</dbReference>
<dbReference type="FunCoup" id="Q9CQE0">
    <property type="interactions" value="860"/>
</dbReference>
<dbReference type="IntAct" id="Q9CQE0">
    <property type="interactions" value="1"/>
</dbReference>
<dbReference type="STRING" id="10090.ENSMUSP00000157102"/>
<dbReference type="GlyGen" id="Q9CQE0">
    <property type="glycosylation" value="1 site, 1 O-linked glycan (1 site)"/>
</dbReference>
<dbReference type="iPTMnet" id="Q9CQE0"/>
<dbReference type="PhosphoSitePlus" id="Q9CQE0"/>
<dbReference type="SwissPalm" id="Q9CQE0"/>
<dbReference type="PaxDb" id="10090-ENSMUSP00000056641"/>
<dbReference type="PeptideAtlas" id="Q9CQE0"/>
<dbReference type="ProteomicsDB" id="301611">
    <molecule id="Q9CQE0-1"/>
</dbReference>
<dbReference type="ProteomicsDB" id="301612">
    <molecule id="Q9CQE0-2"/>
</dbReference>
<dbReference type="Pumba" id="Q9CQE0"/>
<dbReference type="Antibodypedia" id="22190">
    <property type="antibodies" value="214 antibodies from 27 providers"/>
</dbReference>
<dbReference type="DNASU" id="56515"/>
<dbReference type="Ensembl" id="ENSMUST00000052396.7">
    <molecule id="Q9CQE0-2"/>
    <property type="protein sequence ID" value="ENSMUSP00000056641.7"/>
    <property type="gene ID" value="ENSMUSG00000024317.16"/>
</dbReference>
<dbReference type="Ensembl" id="ENSMUST00000072847.12">
    <molecule id="Q9CQE0-2"/>
    <property type="protein sequence ID" value="ENSMUSP00000072626.6"/>
    <property type="gene ID" value="ENSMUSG00000024317.16"/>
</dbReference>
<dbReference type="Ensembl" id="ENSMUST00000234107.2">
    <molecule id="Q9CQE0-1"/>
    <property type="protein sequence ID" value="ENSMUSP00000157102.2"/>
    <property type="gene ID" value="ENSMUSG00000024317.16"/>
</dbReference>
<dbReference type="Ensembl" id="ENSMUST00000234536.2">
    <molecule id="Q9CQE0-1"/>
    <property type="protein sequence ID" value="ENSMUSP00000157047.2"/>
    <property type="gene ID" value="ENSMUSG00000024317.16"/>
</dbReference>
<dbReference type="GeneID" id="56515"/>
<dbReference type="KEGG" id="mmu:56515"/>
<dbReference type="UCSC" id="uc008efc.2">
    <molecule id="Q9CQE0-2"/>
    <property type="organism name" value="mouse"/>
</dbReference>
<dbReference type="UCSC" id="uc056zfx.1">
    <molecule id="Q9CQE0-1"/>
    <property type="organism name" value="mouse"/>
</dbReference>
<dbReference type="AGR" id="MGI:1929211"/>
<dbReference type="CTD" id="51444"/>
<dbReference type="MGI" id="MGI:1929211">
    <property type="gene designation" value="Rnf138"/>
</dbReference>
<dbReference type="VEuPathDB" id="HostDB:ENSMUSG00000024317"/>
<dbReference type="eggNOG" id="ENOG502RP2G">
    <property type="taxonomic scope" value="Eukaryota"/>
</dbReference>
<dbReference type="GeneTree" id="ENSGT00950000182909"/>
<dbReference type="HOGENOM" id="CLU_092448_0_0_1"/>
<dbReference type="InParanoid" id="Q9CQE0"/>
<dbReference type="OMA" id="CFNEEDF"/>
<dbReference type="OrthoDB" id="7873042at2759"/>
<dbReference type="PhylomeDB" id="Q9CQE0"/>
<dbReference type="TreeFam" id="TF331012"/>
<dbReference type="Reactome" id="R-MMU-983168">
    <property type="pathway name" value="Antigen processing: Ubiquitination &amp; Proteasome degradation"/>
</dbReference>
<dbReference type="UniPathway" id="UPA00143"/>
<dbReference type="BioGRID-ORCS" id="56515">
    <property type="hits" value="1 hit in 114 CRISPR screens"/>
</dbReference>
<dbReference type="ChiTaRS" id="Rnf138">
    <property type="organism name" value="mouse"/>
</dbReference>
<dbReference type="PRO" id="PR:Q9CQE0"/>
<dbReference type="Proteomes" id="UP000000589">
    <property type="component" value="Chromosome 18"/>
</dbReference>
<dbReference type="RNAct" id="Q9CQE0">
    <property type="molecule type" value="protein"/>
</dbReference>
<dbReference type="Bgee" id="ENSMUSG00000024317">
    <property type="expression patterns" value="Expressed in seminiferous tubule of testis and 279 other cell types or tissues"/>
</dbReference>
<dbReference type="ExpressionAtlas" id="Q9CQE0">
    <property type="expression patterns" value="baseline and differential"/>
</dbReference>
<dbReference type="GO" id="GO:0035861">
    <property type="term" value="C:site of double-strand break"/>
    <property type="evidence" value="ECO:0000250"/>
    <property type="project" value="UniProtKB"/>
</dbReference>
<dbReference type="GO" id="GO:0019901">
    <property type="term" value="F:protein kinase binding"/>
    <property type="evidence" value="ECO:0007669"/>
    <property type="project" value="Ensembl"/>
</dbReference>
<dbReference type="GO" id="GO:0003697">
    <property type="term" value="F:single-stranded DNA binding"/>
    <property type="evidence" value="ECO:0000250"/>
    <property type="project" value="UniProtKB"/>
</dbReference>
<dbReference type="GO" id="GO:0061630">
    <property type="term" value="F:ubiquitin protein ligase activity"/>
    <property type="evidence" value="ECO:0000250"/>
    <property type="project" value="UniProtKB"/>
</dbReference>
<dbReference type="GO" id="GO:0008270">
    <property type="term" value="F:zinc ion binding"/>
    <property type="evidence" value="ECO:0007669"/>
    <property type="project" value="UniProtKB-KW"/>
</dbReference>
<dbReference type="GO" id="GO:1990830">
    <property type="term" value="P:cellular response to leukemia inhibitory factor"/>
    <property type="evidence" value="ECO:0000270"/>
    <property type="project" value="MGI"/>
</dbReference>
<dbReference type="GO" id="GO:0010792">
    <property type="term" value="P:DNA double-strand break processing involved in repair via single-strand annealing"/>
    <property type="evidence" value="ECO:0000250"/>
    <property type="project" value="UniProtKB"/>
</dbReference>
<dbReference type="GO" id="GO:0000724">
    <property type="term" value="P:double-strand break repair via homologous recombination"/>
    <property type="evidence" value="ECO:0000250"/>
    <property type="project" value="UniProtKB"/>
</dbReference>
<dbReference type="GO" id="GO:0016567">
    <property type="term" value="P:protein ubiquitination"/>
    <property type="evidence" value="ECO:0000250"/>
    <property type="project" value="UniProtKB"/>
</dbReference>
<dbReference type="GO" id="GO:0016055">
    <property type="term" value="P:Wnt signaling pathway"/>
    <property type="evidence" value="ECO:0007669"/>
    <property type="project" value="UniProtKB-KW"/>
</dbReference>
<dbReference type="CDD" id="cd16544">
    <property type="entry name" value="RING-HC_RNF138"/>
    <property type="match status" value="1"/>
</dbReference>
<dbReference type="FunFam" id="3.30.40.10:FF:000267">
    <property type="entry name" value="E3 ubiquitin-protein ligase RNF138 isoform X1"/>
    <property type="match status" value="1"/>
</dbReference>
<dbReference type="Gene3D" id="3.30.40.10">
    <property type="entry name" value="Zinc/RING finger domain, C3HC4 (zinc finger)"/>
    <property type="match status" value="1"/>
</dbReference>
<dbReference type="InterPro" id="IPR008598">
    <property type="entry name" value="Di19_Zn-bd"/>
</dbReference>
<dbReference type="InterPro" id="IPR052498">
    <property type="entry name" value="E3_ubiq-protein_ligase_RNF138"/>
</dbReference>
<dbReference type="InterPro" id="IPR034734">
    <property type="entry name" value="ZF_C2HC_RNF"/>
</dbReference>
<dbReference type="InterPro" id="IPR001841">
    <property type="entry name" value="Znf_RING"/>
</dbReference>
<dbReference type="InterPro" id="IPR013083">
    <property type="entry name" value="Znf_RING/FYVE/PHD"/>
</dbReference>
<dbReference type="PANTHER" id="PTHR46968">
    <property type="entry name" value="E3 UBIQUITIN-PROTEIN LIGASE RNF138"/>
    <property type="match status" value="1"/>
</dbReference>
<dbReference type="PANTHER" id="PTHR46968:SF2">
    <property type="entry name" value="E3 UBIQUITIN-PROTEIN LIGASE RNF138"/>
    <property type="match status" value="1"/>
</dbReference>
<dbReference type="Pfam" id="PF13923">
    <property type="entry name" value="zf-C3HC4_2"/>
    <property type="match status" value="1"/>
</dbReference>
<dbReference type="Pfam" id="PF05605">
    <property type="entry name" value="zf-Di19"/>
    <property type="match status" value="1"/>
</dbReference>
<dbReference type="Pfam" id="PF18574">
    <property type="entry name" value="zf_C2HC_14"/>
    <property type="match status" value="1"/>
</dbReference>
<dbReference type="SMART" id="SM00184">
    <property type="entry name" value="RING"/>
    <property type="match status" value="2"/>
</dbReference>
<dbReference type="SUPFAM" id="SSF57850">
    <property type="entry name" value="RING/U-box"/>
    <property type="match status" value="1"/>
</dbReference>
<dbReference type="PROSITE" id="PS51803">
    <property type="entry name" value="ZF_C2HC_RNF"/>
    <property type="match status" value="1"/>
</dbReference>
<dbReference type="PROSITE" id="PS50089">
    <property type="entry name" value="ZF_RING_2"/>
    <property type="match status" value="1"/>
</dbReference>
<protein>
    <recommendedName>
        <fullName evidence="9">E3 ubiquitin-protein ligase RNF138</fullName>
        <ecNumber evidence="9">2.3.2.27</ecNumber>
    </recommendedName>
    <alternativeName>
        <fullName evidence="9">RING finger protein 138</fullName>
    </alternativeName>
    <alternativeName>
        <fullName evidence="9">RING-type E3 ubiquitin transferase RNF138</fullName>
    </alternativeName>
</protein>